<organism>
    <name type="scientific">Klebsiella pneumoniae subsp. pneumoniae (strain ATCC 700721 / MGH 78578)</name>
    <dbReference type="NCBI Taxonomy" id="272620"/>
    <lineage>
        <taxon>Bacteria</taxon>
        <taxon>Pseudomonadati</taxon>
        <taxon>Pseudomonadota</taxon>
        <taxon>Gammaproteobacteria</taxon>
        <taxon>Enterobacterales</taxon>
        <taxon>Enterobacteriaceae</taxon>
        <taxon>Klebsiella/Raoultella group</taxon>
        <taxon>Klebsiella</taxon>
        <taxon>Klebsiella pneumoniae complex</taxon>
    </lineage>
</organism>
<name>EFTU_KLEP7</name>
<accession>A6TEX7</accession>
<protein>
    <recommendedName>
        <fullName evidence="2">Elongation factor Tu</fullName>
        <shortName evidence="2">EF-Tu</shortName>
        <ecNumber evidence="2">3.6.5.3</ecNumber>
    </recommendedName>
</protein>
<dbReference type="EC" id="3.6.5.3" evidence="2"/>
<dbReference type="EMBL" id="CP000647">
    <property type="protein sequence ID" value="ABR79111.1"/>
    <property type="molecule type" value="Genomic_DNA"/>
</dbReference>
<dbReference type="EMBL" id="CP000647">
    <property type="protein sequence ID" value="ABR79716.1"/>
    <property type="molecule type" value="Genomic_DNA"/>
</dbReference>
<dbReference type="BMRB" id="A6TEX7"/>
<dbReference type="SMR" id="A6TEX7"/>
<dbReference type="STRING" id="272620.KPN_03724"/>
<dbReference type="jPOST" id="A6TEX7"/>
<dbReference type="PaxDb" id="272620-KPN_03724"/>
<dbReference type="EnsemblBacteria" id="ABR79111">
    <property type="protein sequence ID" value="ABR79111"/>
    <property type="gene ID" value="KPN_03724"/>
</dbReference>
<dbReference type="EnsemblBacteria" id="ABR79716">
    <property type="protein sequence ID" value="ABR79716"/>
    <property type="gene ID" value="KPN_04357"/>
</dbReference>
<dbReference type="KEGG" id="kpn:KPN_03724"/>
<dbReference type="KEGG" id="kpn:KPN_04357"/>
<dbReference type="HOGENOM" id="CLU_007265_0_0_6"/>
<dbReference type="Proteomes" id="UP000000265">
    <property type="component" value="Chromosome"/>
</dbReference>
<dbReference type="GO" id="GO:0005829">
    <property type="term" value="C:cytosol"/>
    <property type="evidence" value="ECO:0007669"/>
    <property type="project" value="TreeGrafter"/>
</dbReference>
<dbReference type="GO" id="GO:0005525">
    <property type="term" value="F:GTP binding"/>
    <property type="evidence" value="ECO:0007669"/>
    <property type="project" value="UniProtKB-UniRule"/>
</dbReference>
<dbReference type="GO" id="GO:0003924">
    <property type="term" value="F:GTPase activity"/>
    <property type="evidence" value="ECO:0007669"/>
    <property type="project" value="InterPro"/>
</dbReference>
<dbReference type="GO" id="GO:0097216">
    <property type="term" value="F:guanosine tetraphosphate binding"/>
    <property type="evidence" value="ECO:0007669"/>
    <property type="project" value="UniProtKB-ARBA"/>
</dbReference>
<dbReference type="GO" id="GO:0003746">
    <property type="term" value="F:translation elongation factor activity"/>
    <property type="evidence" value="ECO:0007669"/>
    <property type="project" value="UniProtKB-UniRule"/>
</dbReference>
<dbReference type="CDD" id="cd01884">
    <property type="entry name" value="EF_Tu"/>
    <property type="match status" value="1"/>
</dbReference>
<dbReference type="CDD" id="cd03697">
    <property type="entry name" value="EFTU_II"/>
    <property type="match status" value="1"/>
</dbReference>
<dbReference type="CDD" id="cd03707">
    <property type="entry name" value="EFTU_III"/>
    <property type="match status" value="1"/>
</dbReference>
<dbReference type="FunFam" id="2.40.30.10:FF:000001">
    <property type="entry name" value="Elongation factor Tu"/>
    <property type="match status" value="1"/>
</dbReference>
<dbReference type="FunFam" id="3.40.50.300:FF:000003">
    <property type="entry name" value="Elongation factor Tu"/>
    <property type="match status" value="1"/>
</dbReference>
<dbReference type="Gene3D" id="3.40.50.300">
    <property type="entry name" value="P-loop containing nucleotide triphosphate hydrolases"/>
    <property type="match status" value="1"/>
</dbReference>
<dbReference type="Gene3D" id="2.40.30.10">
    <property type="entry name" value="Translation factors"/>
    <property type="match status" value="2"/>
</dbReference>
<dbReference type="HAMAP" id="MF_00118_B">
    <property type="entry name" value="EF_Tu_B"/>
    <property type="match status" value="1"/>
</dbReference>
<dbReference type="InterPro" id="IPR041709">
    <property type="entry name" value="EF-Tu_GTP-bd"/>
</dbReference>
<dbReference type="InterPro" id="IPR050055">
    <property type="entry name" value="EF-Tu_GTPase"/>
</dbReference>
<dbReference type="InterPro" id="IPR004161">
    <property type="entry name" value="EFTu-like_2"/>
</dbReference>
<dbReference type="InterPro" id="IPR033720">
    <property type="entry name" value="EFTU_2"/>
</dbReference>
<dbReference type="InterPro" id="IPR031157">
    <property type="entry name" value="G_TR_CS"/>
</dbReference>
<dbReference type="InterPro" id="IPR027417">
    <property type="entry name" value="P-loop_NTPase"/>
</dbReference>
<dbReference type="InterPro" id="IPR005225">
    <property type="entry name" value="Small_GTP-bd"/>
</dbReference>
<dbReference type="InterPro" id="IPR000795">
    <property type="entry name" value="T_Tr_GTP-bd_dom"/>
</dbReference>
<dbReference type="InterPro" id="IPR009000">
    <property type="entry name" value="Transl_B-barrel_sf"/>
</dbReference>
<dbReference type="InterPro" id="IPR009001">
    <property type="entry name" value="Transl_elong_EF1A/Init_IF2_C"/>
</dbReference>
<dbReference type="InterPro" id="IPR004541">
    <property type="entry name" value="Transl_elong_EFTu/EF1A_bac/org"/>
</dbReference>
<dbReference type="InterPro" id="IPR004160">
    <property type="entry name" value="Transl_elong_EFTu/EF1A_C"/>
</dbReference>
<dbReference type="NCBIfam" id="TIGR00485">
    <property type="entry name" value="EF-Tu"/>
    <property type="match status" value="1"/>
</dbReference>
<dbReference type="NCBIfam" id="NF000766">
    <property type="entry name" value="PRK00049.1"/>
    <property type="match status" value="1"/>
</dbReference>
<dbReference type="NCBIfam" id="NF009372">
    <property type="entry name" value="PRK12735.1"/>
    <property type="match status" value="1"/>
</dbReference>
<dbReference type="NCBIfam" id="NF009373">
    <property type="entry name" value="PRK12736.1"/>
    <property type="match status" value="1"/>
</dbReference>
<dbReference type="NCBIfam" id="TIGR00231">
    <property type="entry name" value="small_GTP"/>
    <property type="match status" value="1"/>
</dbReference>
<dbReference type="PANTHER" id="PTHR43721:SF22">
    <property type="entry name" value="ELONGATION FACTOR TU, MITOCHONDRIAL"/>
    <property type="match status" value="1"/>
</dbReference>
<dbReference type="PANTHER" id="PTHR43721">
    <property type="entry name" value="ELONGATION FACTOR TU-RELATED"/>
    <property type="match status" value="1"/>
</dbReference>
<dbReference type="Pfam" id="PF00009">
    <property type="entry name" value="GTP_EFTU"/>
    <property type="match status" value="1"/>
</dbReference>
<dbReference type="Pfam" id="PF03144">
    <property type="entry name" value="GTP_EFTU_D2"/>
    <property type="match status" value="1"/>
</dbReference>
<dbReference type="Pfam" id="PF03143">
    <property type="entry name" value="GTP_EFTU_D3"/>
    <property type="match status" value="1"/>
</dbReference>
<dbReference type="PRINTS" id="PR00315">
    <property type="entry name" value="ELONGATNFCT"/>
</dbReference>
<dbReference type="SUPFAM" id="SSF50465">
    <property type="entry name" value="EF-Tu/eEF-1alpha/eIF2-gamma C-terminal domain"/>
    <property type="match status" value="1"/>
</dbReference>
<dbReference type="SUPFAM" id="SSF52540">
    <property type="entry name" value="P-loop containing nucleoside triphosphate hydrolases"/>
    <property type="match status" value="1"/>
</dbReference>
<dbReference type="SUPFAM" id="SSF50447">
    <property type="entry name" value="Translation proteins"/>
    <property type="match status" value="1"/>
</dbReference>
<dbReference type="PROSITE" id="PS00301">
    <property type="entry name" value="G_TR_1"/>
    <property type="match status" value="1"/>
</dbReference>
<dbReference type="PROSITE" id="PS51722">
    <property type="entry name" value="G_TR_2"/>
    <property type="match status" value="1"/>
</dbReference>
<feature type="chain" id="PRO_1000015675" description="Elongation factor Tu">
    <location>
        <begin position="1"/>
        <end position="394"/>
    </location>
</feature>
<feature type="domain" description="tr-type G">
    <location>
        <begin position="10"/>
        <end position="204"/>
    </location>
</feature>
<feature type="region of interest" description="G1" evidence="1">
    <location>
        <begin position="19"/>
        <end position="26"/>
    </location>
</feature>
<feature type="region of interest" description="G2" evidence="1">
    <location>
        <begin position="60"/>
        <end position="64"/>
    </location>
</feature>
<feature type="region of interest" description="G3" evidence="1">
    <location>
        <begin position="81"/>
        <end position="84"/>
    </location>
</feature>
<feature type="region of interest" description="G4" evidence="1">
    <location>
        <begin position="136"/>
        <end position="139"/>
    </location>
</feature>
<feature type="region of interest" description="G5" evidence="1">
    <location>
        <begin position="174"/>
        <end position="176"/>
    </location>
</feature>
<feature type="binding site" evidence="2">
    <location>
        <begin position="19"/>
        <end position="26"/>
    </location>
    <ligand>
        <name>GTP</name>
        <dbReference type="ChEBI" id="CHEBI:37565"/>
    </ligand>
</feature>
<feature type="binding site" evidence="2">
    <location>
        <position position="26"/>
    </location>
    <ligand>
        <name>Mg(2+)</name>
        <dbReference type="ChEBI" id="CHEBI:18420"/>
    </ligand>
</feature>
<feature type="binding site" evidence="2">
    <location>
        <begin position="81"/>
        <end position="85"/>
    </location>
    <ligand>
        <name>GTP</name>
        <dbReference type="ChEBI" id="CHEBI:37565"/>
    </ligand>
</feature>
<feature type="binding site" evidence="2">
    <location>
        <begin position="136"/>
        <end position="139"/>
    </location>
    <ligand>
        <name>GTP</name>
        <dbReference type="ChEBI" id="CHEBI:37565"/>
    </ligand>
</feature>
<evidence type="ECO:0000250" key="1"/>
<evidence type="ECO:0000255" key="2">
    <source>
        <dbReference type="HAMAP-Rule" id="MF_00118"/>
    </source>
</evidence>
<comment type="function">
    <text evidence="2">GTP hydrolase that promotes the GTP-dependent binding of aminoacyl-tRNA to the A-site of ribosomes during protein biosynthesis.</text>
</comment>
<comment type="catalytic activity">
    <reaction evidence="2">
        <text>GTP + H2O = GDP + phosphate + H(+)</text>
        <dbReference type="Rhea" id="RHEA:19669"/>
        <dbReference type="ChEBI" id="CHEBI:15377"/>
        <dbReference type="ChEBI" id="CHEBI:15378"/>
        <dbReference type="ChEBI" id="CHEBI:37565"/>
        <dbReference type="ChEBI" id="CHEBI:43474"/>
        <dbReference type="ChEBI" id="CHEBI:58189"/>
        <dbReference type="EC" id="3.6.5.3"/>
    </reaction>
    <physiologicalReaction direction="left-to-right" evidence="2">
        <dbReference type="Rhea" id="RHEA:19670"/>
    </physiologicalReaction>
</comment>
<comment type="subunit">
    <text evidence="2">Monomer.</text>
</comment>
<comment type="subcellular location">
    <subcellularLocation>
        <location evidence="2">Cytoplasm</location>
    </subcellularLocation>
</comment>
<comment type="similarity">
    <text evidence="2">Belongs to the TRAFAC class translation factor GTPase superfamily. Classic translation factor GTPase family. EF-Tu/EF-1A subfamily.</text>
</comment>
<gene>
    <name evidence="2" type="primary">tufA</name>
    <name type="ordered locus">KPN78578_36870</name>
    <name type="ORF">KPN_03724</name>
</gene>
<gene>
    <name evidence="2" type="primary">tufB</name>
    <name type="ordered locus">KPN78578_42920</name>
    <name type="ORF">KPN_04357</name>
</gene>
<sequence length="394" mass="43246">MSKEKFERTKPHVNVGTIGHVDHGKTTLTAAITTVLAKTYGGSARAFDQIDNAPEEKARGITINTSHVEYDTPTRHYAHVDCPGHADYVKNMITGAAQMDGAILVVAATDGPMPQTREHILLGRQVGVPYIIVFLNKCDMVDDEELLELVEMEVRELLSQYDFPGDDTPIVRGSALKALEGDAEWEAKIIELAGHLDTYIPEPERAIDKPFLLPIEDVFSISGRGTVVTGRVERGIIKVGEEVEIVGIKETAKTTCTGVEMFRKLLDEGRAGENVGVLLRGIKREEIERGQVLAKPGTINPHTKFESEVYILSKDEGGRHTPFFKGYRPQFYFRTTDVTGTIELPEGVEMVMPGDNIKMVVTLIHPIAMDDGLRFAIREGGRTVGAGVVAKVLG</sequence>
<proteinExistence type="inferred from homology"/>
<reference key="1">
    <citation type="submission" date="2006-09" db="EMBL/GenBank/DDBJ databases">
        <authorList>
            <consortium name="The Klebsiella pneumonia Genome Sequencing Project"/>
            <person name="McClelland M."/>
            <person name="Sanderson E.K."/>
            <person name="Spieth J."/>
            <person name="Clifton W.S."/>
            <person name="Latreille P."/>
            <person name="Sabo A."/>
            <person name="Pepin K."/>
            <person name="Bhonagiri V."/>
            <person name="Porwollik S."/>
            <person name="Ali J."/>
            <person name="Wilson R.K."/>
        </authorList>
    </citation>
    <scope>NUCLEOTIDE SEQUENCE [LARGE SCALE GENOMIC DNA]</scope>
    <source>
        <strain>ATCC 700721 / MGH 78578</strain>
    </source>
</reference>
<keyword id="KW-0963">Cytoplasm</keyword>
<keyword id="KW-0251">Elongation factor</keyword>
<keyword id="KW-0342">GTP-binding</keyword>
<keyword id="KW-0378">Hydrolase</keyword>
<keyword id="KW-0460">Magnesium</keyword>
<keyword id="KW-0479">Metal-binding</keyword>
<keyword id="KW-0547">Nucleotide-binding</keyword>
<keyword id="KW-0648">Protein biosynthesis</keyword>